<evidence type="ECO:0000255" key="1">
    <source>
        <dbReference type="HAMAP-Rule" id="MF_01554"/>
    </source>
</evidence>
<keyword id="KW-0413">Isomerase</keyword>
<keyword id="KW-0460">Magnesium</keyword>
<keyword id="KW-0479">Metal-binding</keyword>
<keyword id="KW-0597">Phosphoprotein</keyword>
<keyword id="KW-1185">Reference proteome</keyword>
<proteinExistence type="inferred from homology"/>
<reference key="1">
    <citation type="journal article" date="2011" name="Stand. Genomic Sci.">
        <title>Complete genome sequence of 'Thioalkalivibrio sulfidophilus' HL-EbGr7.</title>
        <authorList>
            <person name="Muyzer G."/>
            <person name="Sorokin D.Y."/>
            <person name="Mavromatis K."/>
            <person name="Lapidus A."/>
            <person name="Clum A."/>
            <person name="Ivanova N."/>
            <person name="Pati A."/>
            <person name="d'Haeseleer P."/>
            <person name="Woyke T."/>
            <person name="Kyrpides N.C."/>
        </authorList>
    </citation>
    <scope>NUCLEOTIDE SEQUENCE [LARGE SCALE GENOMIC DNA]</scope>
    <source>
        <strain>HL-EbGR7</strain>
    </source>
</reference>
<dbReference type="EC" id="5.4.2.10" evidence="1"/>
<dbReference type="EMBL" id="CP001339">
    <property type="protein sequence ID" value="ACL72071.1"/>
    <property type="molecule type" value="Genomic_DNA"/>
</dbReference>
<dbReference type="RefSeq" id="WP_012637555.1">
    <property type="nucleotide sequence ID" value="NC_011901.1"/>
</dbReference>
<dbReference type="SMR" id="B8GNY2"/>
<dbReference type="STRING" id="396588.Tgr7_0983"/>
<dbReference type="KEGG" id="tgr:Tgr7_0983"/>
<dbReference type="eggNOG" id="COG1109">
    <property type="taxonomic scope" value="Bacteria"/>
</dbReference>
<dbReference type="HOGENOM" id="CLU_016950_7_0_6"/>
<dbReference type="OrthoDB" id="9803322at2"/>
<dbReference type="Proteomes" id="UP000002383">
    <property type="component" value="Chromosome"/>
</dbReference>
<dbReference type="GO" id="GO:0005829">
    <property type="term" value="C:cytosol"/>
    <property type="evidence" value="ECO:0007669"/>
    <property type="project" value="TreeGrafter"/>
</dbReference>
<dbReference type="GO" id="GO:0000287">
    <property type="term" value="F:magnesium ion binding"/>
    <property type="evidence" value="ECO:0007669"/>
    <property type="project" value="UniProtKB-UniRule"/>
</dbReference>
<dbReference type="GO" id="GO:0008966">
    <property type="term" value="F:phosphoglucosamine mutase activity"/>
    <property type="evidence" value="ECO:0007669"/>
    <property type="project" value="UniProtKB-UniRule"/>
</dbReference>
<dbReference type="GO" id="GO:0004615">
    <property type="term" value="F:phosphomannomutase activity"/>
    <property type="evidence" value="ECO:0007669"/>
    <property type="project" value="TreeGrafter"/>
</dbReference>
<dbReference type="GO" id="GO:0005975">
    <property type="term" value="P:carbohydrate metabolic process"/>
    <property type="evidence" value="ECO:0007669"/>
    <property type="project" value="InterPro"/>
</dbReference>
<dbReference type="GO" id="GO:0009252">
    <property type="term" value="P:peptidoglycan biosynthetic process"/>
    <property type="evidence" value="ECO:0007669"/>
    <property type="project" value="TreeGrafter"/>
</dbReference>
<dbReference type="GO" id="GO:0006048">
    <property type="term" value="P:UDP-N-acetylglucosamine biosynthetic process"/>
    <property type="evidence" value="ECO:0007669"/>
    <property type="project" value="TreeGrafter"/>
</dbReference>
<dbReference type="CDD" id="cd05802">
    <property type="entry name" value="GlmM"/>
    <property type="match status" value="1"/>
</dbReference>
<dbReference type="FunFam" id="3.30.310.50:FF:000001">
    <property type="entry name" value="Phosphoglucosamine mutase"/>
    <property type="match status" value="1"/>
</dbReference>
<dbReference type="FunFam" id="3.40.120.10:FF:000001">
    <property type="entry name" value="Phosphoglucosamine mutase"/>
    <property type="match status" value="1"/>
</dbReference>
<dbReference type="FunFam" id="3.40.120.10:FF:000003">
    <property type="entry name" value="Phosphoglucosamine mutase"/>
    <property type="match status" value="1"/>
</dbReference>
<dbReference type="Gene3D" id="3.40.120.10">
    <property type="entry name" value="Alpha-D-Glucose-1,6-Bisphosphate, subunit A, domain 3"/>
    <property type="match status" value="3"/>
</dbReference>
<dbReference type="Gene3D" id="3.30.310.50">
    <property type="entry name" value="Alpha-D-phosphohexomutase, C-terminal domain"/>
    <property type="match status" value="1"/>
</dbReference>
<dbReference type="HAMAP" id="MF_01554_B">
    <property type="entry name" value="GlmM_B"/>
    <property type="match status" value="1"/>
</dbReference>
<dbReference type="InterPro" id="IPR005844">
    <property type="entry name" value="A-D-PHexomutase_a/b/a-I"/>
</dbReference>
<dbReference type="InterPro" id="IPR016055">
    <property type="entry name" value="A-D-PHexomutase_a/b/a-I/II/III"/>
</dbReference>
<dbReference type="InterPro" id="IPR005845">
    <property type="entry name" value="A-D-PHexomutase_a/b/a-II"/>
</dbReference>
<dbReference type="InterPro" id="IPR005846">
    <property type="entry name" value="A-D-PHexomutase_a/b/a-III"/>
</dbReference>
<dbReference type="InterPro" id="IPR005843">
    <property type="entry name" value="A-D-PHexomutase_C"/>
</dbReference>
<dbReference type="InterPro" id="IPR036900">
    <property type="entry name" value="A-D-PHexomutase_C_sf"/>
</dbReference>
<dbReference type="InterPro" id="IPR016066">
    <property type="entry name" value="A-D-PHexomutase_CS"/>
</dbReference>
<dbReference type="InterPro" id="IPR005841">
    <property type="entry name" value="Alpha-D-phosphohexomutase_SF"/>
</dbReference>
<dbReference type="InterPro" id="IPR006352">
    <property type="entry name" value="GlmM_bact"/>
</dbReference>
<dbReference type="InterPro" id="IPR050060">
    <property type="entry name" value="Phosphoglucosamine_mutase"/>
</dbReference>
<dbReference type="NCBIfam" id="TIGR01455">
    <property type="entry name" value="glmM"/>
    <property type="match status" value="1"/>
</dbReference>
<dbReference type="NCBIfam" id="NF008139">
    <property type="entry name" value="PRK10887.1"/>
    <property type="match status" value="1"/>
</dbReference>
<dbReference type="PANTHER" id="PTHR42946:SF1">
    <property type="entry name" value="PHOSPHOGLUCOMUTASE (ALPHA-D-GLUCOSE-1,6-BISPHOSPHATE-DEPENDENT)"/>
    <property type="match status" value="1"/>
</dbReference>
<dbReference type="PANTHER" id="PTHR42946">
    <property type="entry name" value="PHOSPHOHEXOSE MUTASE"/>
    <property type="match status" value="1"/>
</dbReference>
<dbReference type="Pfam" id="PF02878">
    <property type="entry name" value="PGM_PMM_I"/>
    <property type="match status" value="1"/>
</dbReference>
<dbReference type="Pfam" id="PF02879">
    <property type="entry name" value="PGM_PMM_II"/>
    <property type="match status" value="1"/>
</dbReference>
<dbReference type="Pfam" id="PF02880">
    <property type="entry name" value="PGM_PMM_III"/>
    <property type="match status" value="1"/>
</dbReference>
<dbReference type="Pfam" id="PF00408">
    <property type="entry name" value="PGM_PMM_IV"/>
    <property type="match status" value="1"/>
</dbReference>
<dbReference type="PRINTS" id="PR00509">
    <property type="entry name" value="PGMPMM"/>
</dbReference>
<dbReference type="SUPFAM" id="SSF55957">
    <property type="entry name" value="Phosphoglucomutase, C-terminal domain"/>
    <property type="match status" value="1"/>
</dbReference>
<dbReference type="SUPFAM" id="SSF53738">
    <property type="entry name" value="Phosphoglucomutase, first 3 domains"/>
    <property type="match status" value="3"/>
</dbReference>
<dbReference type="PROSITE" id="PS00710">
    <property type="entry name" value="PGM_PMM"/>
    <property type="match status" value="1"/>
</dbReference>
<gene>
    <name evidence="1" type="primary">glmM</name>
    <name type="ordered locus">Tgr7_0983</name>
</gene>
<name>GLMM_THISH</name>
<accession>B8GNY2</accession>
<feature type="chain" id="PRO_1000185393" description="Phosphoglucosamine mutase">
    <location>
        <begin position="1"/>
        <end position="451"/>
    </location>
</feature>
<feature type="active site" description="Phosphoserine intermediate" evidence="1">
    <location>
        <position position="101"/>
    </location>
</feature>
<feature type="binding site" description="via phosphate group" evidence="1">
    <location>
        <position position="101"/>
    </location>
    <ligand>
        <name>Mg(2+)</name>
        <dbReference type="ChEBI" id="CHEBI:18420"/>
    </ligand>
</feature>
<feature type="binding site" evidence="1">
    <location>
        <position position="240"/>
    </location>
    <ligand>
        <name>Mg(2+)</name>
        <dbReference type="ChEBI" id="CHEBI:18420"/>
    </ligand>
</feature>
<feature type="binding site" evidence="1">
    <location>
        <position position="242"/>
    </location>
    <ligand>
        <name>Mg(2+)</name>
        <dbReference type="ChEBI" id="CHEBI:18420"/>
    </ligand>
</feature>
<feature type="binding site" evidence="1">
    <location>
        <position position="244"/>
    </location>
    <ligand>
        <name>Mg(2+)</name>
        <dbReference type="ChEBI" id="CHEBI:18420"/>
    </ligand>
</feature>
<feature type="modified residue" description="Phosphoserine" evidence="1">
    <location>
        <position position="101"/>
    </location>
</feature>
<organism>
    <name type="scientific">Thioalkalivibrio sulfidiphilus (strain HL-EbGR7)</name>
    <dbReference type="NCBI Taxonomy" id="396588"/>
    <lineage>
        <taxon>Bacteria</taxon>
        <taxon>Pseudomonadati</taxon>
        <taxon>Pseudomonadota</taxon>
        <taxon>Gammaproteobacteria</taxon>
        <taxon>Chromatiales</taxon>
        <taxon>Ectothiorhodospiraceae</taxon>
        <taxon>Thioalkalivibrio</taxon>
    </lineage>
</organism>
<protein>
    <recommendedName>
        <fullName evidence="1">Phosphoglucosamine mutase</fullName>
        <ecNumber evidence="1">5.4.2.10</ecNumber>
    </recommendedName>
</protein>
<comment type="function">
    <text evidence="1">Catalyzes the conversion of glucosamine-6-phosphate to glucosamine-1-phosphate.</text>
</comment>
<comment type="catalytic activity">
    <reaction evidence="1">
        <text>alpha-D-glucosamine 1-phosphate = D-glucosamine 6-phosphate</text>
        <dbReference type="Rhea" id="RHEA:23424"/>
        <dbReference type="ChEBI" id="CHEBI:58516"/>
        <dbReference type="ChEBI" id="CHEBI:58725"/>
        <dbReference type="EC" id="5.4.2.10"/>
    </reaction>
</comment>
<comment type="cofactor">
    <cofactor evidence="1">
        <name>Mg(2+)</name>
        <dbReference type="ChEBI" id="CHEBI:18420"/>
    </cofactor>
    <text evidence="1">Binds 1 Mg(2+) ion per subunit.</text>
</comment>
<comment type="PTM">
    <text evidence="1">Activated by phosphorylation.</text>
</comment>
<comment type="similarity">
    <text evidence="1">Belongs to the phosphohexose mutase family.</text>
</comment>
<sequence>MDRRYFGTDGIRGRVGRTPMTPDFALRLGWAAGRVLAPRGNGLVIIGKDTRVSGYMFESALEAGLSAAGTDIRLLGPMPTPAVAYLTRTFRASAGIVISASHNPFYDNGFKFFSAQGTKLPDEVELAIEAELEKPIETVDSADIGKAERVVDAAGRYIEFCKSTIPNGTAFHDLKLVVDCAHGATYAVAPSVFEELGAEVVAIGAEPDGFNINEKAGSLHPENLRAAVLAQRADAGIALDGDGDRLVLVDEQGEVLDGDEALCIIALARAGEGALGGGVVGTQMSNLGLELALKAQGIAFERAAVGDRYVMEMLQQRGWLLGGESSGHILCLDRTSTGDGIVSALQVLAIMQATGRPLSELRKVMAKFPQTLLNVPLNGGVARDALLSAKAVKEAVRAAEGALGGEGRVLLRPSGTEPLMRVMVEGRERRQVEQIAREIAEAVRSVADHAG</sequence>